<reference key="1">
    <citation type="journal article" date="2008" name="Genome Res.">
        <title>Insights from the complete genome sequence of Mycobacterium marinum on the evolution of Mycobacterium tuberculosis.</title>
        <authorList>
            <person name="Stinear T.P."/>
            <person name="Seemann T."/>
            <person name="Harrison P.F."/>
            <person name="Jenkin G.A."/>
            <person name="Davies J.K."/>
            <person name="Johnson P.D."/>
            <person name="Abdellah Z."/>
            <person name="Arrowsmith C."/>
            <person name="Chillingworth T."/>
            <person name="Churcher C."/>
            <person name="Clarke K."/>
            <person name="Cronin A."/>
            <person name="Davis P."/>
            <person name="Goodhead I."/>
            <person name="Holroyd N."/>
            <person name="Jagels K."/>
            <person name="Lord A."/>
            <person name="Moule S."/>
            <person name="Mungall K."/>
            <person name="Norbertczak H."/>
            <person name="Quail M.A."/>
            <person name="Rabbinowitsch E."/>
            <person name="Walker D."/>
            <person name="White B."/>
            <person name="Whitehead S."/>
            <person name="Small P.L."/>
            <person name="Brosch R."/>
            <person name="Ramakrishnan L."/>
            <person name="Fischbach M.A."/>
            <person name="Parkhill J."/>
            <person name="Cole S.T."/>
        </authorList>
    </citation>
    <scope>NUCLEOTIDE SEQUENCE [LARGE SCALE GENOMIC DNA]</scope>
    <source>
        <strain>ATCC BAA-535 / M</strain>
    </source>
</reference>
<accession>B2HKQ1</accession>
<keyword id="KW-1185">Reference proteome</keyword>
<keyword id="KW-0687">Ribonucleoprotein</keyword>
<keyword id="KW-0689">Ribosomal protein</keyword>
<keyword id="KW-0694">RNA-binding</keyword>
<keyword id="KW-0699">rRNA-binding</keyword>
<protein>
    <recommendedName>
        <fullName evidence="1">Small ribosomal subunit protein bS18B</fullName>
    </recommendedName>
    <alternativeName>
        <fullName evidence="2">30S ribosomal protein S18 2</fullName>
    </alternativeName>
</protein>
<sequence>MKKKPRRTRRPIAAPATPAKKNLLDSLGVSEVDYKDISRLRTFISDRGKIRSRRVTGLTVQQQRQIATAIKNAREMALLPYPASRPQ</sequence>
<feature type="chain" id="PRO_0000345503" description="Small ribosomal subunit protein bS18B">
    <location>
        <begin position="1"/>
        <end position="87"/>
    </location>
</feature>
<name>RS182_MYCMM</name>
<dbReference type="EMBL" id="CP000854">
    <property type="protein sequence ID" value="ACC38756.1"/>
    <property type="molecule type" value="Genomic_DNA"/>
</dbReference>
<dbReference type="RefSeq" id="WP_011742332.1">
    <property type="nucleotide sequence ID" value="NC_010612.1"/>
</dbReference>
<dbReference type="SMR" id="B2HKQ1"/>
<dbReference type="STRING" id="216594.MMAR_0289"/>
<dbReference type="GeneID" id="93439328"/>
<dbReference type="KEGG" id="mmi:MMAR_0289"/>
<dbReference type="eggNOG" id="COG0238">
    <property type="taxonomic scope" value="Bacteria"/>
</dbReference>
<dbReference type="HOGENOM" id="CLU_148710_1_0_11"/>
<dbReference type="OrthoDB" id="9812008at2"/>
<dbReference type="Proteomes" id="UP000001190">
    <property type="component" value="Chromosome"/>
</dbReference>
<dbReference type="GO" id="GO:0022627">
    <property type="term" value="C:cytosolic small ribosomal subunit"/>
    <property type="evidence" value="ECO:0007669"/>
    <property type="project" value="TreeGrafter"/>
</dbReference>
<dbReference type="GO" id="GO:0070181">
    <property type="term" value="F:small ribosomal subunit rRNA binding"/>
    <property type="evidence" value="ECO:0007669"/>
    <property type="project" value="TreeGrafter"/>
</dbReference>
<dbReference type="GO" id="GO:0003735">
    <property type="term" value="F:structural constituent of ribosome"/>
    <property type="evidence" value="ECO:0007669"/>
    <property type="project" value="InterPro"/>
</dbReference>
<dbReference type="GO" id="GO:0006412">
    <property type="term" value="P:translation"/>
    <property type="evidence" value="ECO:0007669"/>
    <property type="project" value="UniProtKB-UniRule"/>
</dbReference>
<dbReference type="FunFam" id="4.10.640.10:FF:000016">
    <property type="entry name" value="30S ribosomal protein S18"/>
    <property type="match status" value="1"/>
</dbReference>
<dbReference type="Gene3D" id="4.10.640.10">
    <property type="entry name" value="Ribosomal protein S18"/>
    <property type="match status" value="1"/>
</dbReference>
<dbReference type="HAMAP" id="MF_00270">
    <property type="entry name" value="Ribosomal_bS18"/>
    <property type="match status" value="1"/>
</dbReference>
<dbReference type="InterPro" id="IPR001648">
    <property type="entry name" value="Ribosomal_bS18"/>
</dbReference>
<dbReference type="InterPro" id="IPR018275">
    <property type="entry name" value="Ribosomal_bS18_CS"/>
</dbReference>
<dbReference type="InterPro" id="IPR036870">
    <property type="entry name" value="Ribosomal_bS18_sf"/>
</dbReference>
<dbReference type="NCBIfam" id="TIGR00165">
    <property type="entry name" value="S18"/>
    <property type="match status" value="1"/>
</dbReference>
<dbReference type="PANTHER" id="PTHR13479">
    <property type="entry name" value="30S RIBOSOMAL PROTEIN S18"/>
    <property type="match status" value="1"/>
</dbReference>
<dbReference type="PANTHER" id="PTHR13479:SF40">
    <property type="entry name" value="SMALL RIBOSOMAL SUBUNIT PROTEIN BS18M"/>
    <property type="match status" value="1"/>
</dbReference>
<dbReference type="Pfam" id="PF01084">
    <property type="entry name" value="Ribosomal_S18"/>
    <property type="match status" value="1"/>
</dbReference>
<dbReference type="PRINTS" id="PR00974">
    <property type="entry name" value="RIBOSOMALS18"/>
</dbReference>
<dbReference type="SUPFAM" id="SSF46911">
    <property type="entry name" value="Ribosomal protein S18"/>
    <property type="match status" value="1"/>
</dbReference>
<dbReference type="PROSITE" id="PS00057">
    <property type="entry name" value="RIBOSOMAL_S18"/>
    <property type="match status" value="1"/>
</dbReference>
<gene>
    <name evidence="1" type="primary">rpsR2</name>
    <name type="ordered locus">MMAR_0289</name>
</gene>
<proteinExistence type="inferred from homology"/>
<evidence type="ECO:0000255" key="1">
    <source>
        <dbReference type="HAMAP-Rule" id="MF_00270"/>
    </source>
</evidence>
<evidence type="ECO:0000305" key="2"/>
<organism>
    <name type="scientific">Mycobacterium marinum (strain ATCC BAA-535 / M)</name>
    <dbReference type="NCBI Taxonomy" id="216594"/>
    <lineage>
        <taxon>Bacteria</taxon>
        <taxon>Bacillati</taxon>
        <taxon>Actinomycetota</taxon>
        <taxon>Actinomycetes</taxon>
        <taxon>Mycobacteriales</taxon>
        <taxon>Mycobacteriaceae</taxon>
        <taxon>Mycobacterium</taxon>
        <taxon>Mycobacterium ulcerans group</taxon>
    </lineage>
</organism>
<comment type="function">
    <text evidence="1">Binds as a heterodimer with protein bS6 to the central domain of the 16S rRNA, where it helps stabilize the platform of the 30S subunit.</text>
</comment>
<comment type="subunit">
    <text evidence="1">Part of the 30S ribosomal subunit. Forms a tight heterodimer with protein bS6.</text>
</comment>
<comment type="similarity">
    <text evidence="1">Belongs to the bacterial ribosomal protein bS18 family.</text>
</comment>